<dbReference type="EMBL" id="CP000857">
    <property type="protein sequence ID" value="ACN48739.1"/>
    <property type="molecule type" value="Genomic_DNA"/>
</dbReference>
<dbReference type="RefSeq" id="WP_000175965.1">
    <property type="nucleotide sequence ID" value="NC_012125.1"/>
</dbReference>
<dbReference type="SMR" id="C0Q7L6"/>
<dbReference type="KEGG" id="sei:SPC_4696"/>
<dbReference type="HOGENOM" id="CLU_002794_2_1_6"/>
<dbReference type="Proteomes" id="UP000001599">
    <property type="component" value="Chromosome"/>
</dbReference>
<dbReference type="GO" id="GO:0005829">
    <property type="term" value="C:cytosol"/>
    <property type="evidence" value="ECO:0007669"/>
    <property type="project" value="TreeGrafter"/>
</dbReference>
<dbReference type="GO" id="GO:0005525">
    <property type="term" value="F:GTP binding"/>
    <property type="evidence" value="ECO:0007669"/>
    <property type="project" value="UniProtKB-UniRule"/>
</dbReference>
<dbReference type="GO" id="GO:0003924">
    <property type="term" value="F:GTPase activity"/>
    <property type="evidence" value="ECO:0007669"/>
    <property type="project" value="InterPro"/>
</dbReference>
<dbReference type="GO" id="GO:0097216">
    <property type="term" value="F:guanosine tetraphosphate binding"/>
    <property type="evidence" value="ECO:0007669"/>
    <property type="project" value="UniProtKB-ARBA"/>
</dbReference>
<dbReference type="GO" id="GO:0016150">
    <property type="term" value="F:translation release factor activity, codon nonspecific"/>
    <property type="evidence" value="ECO:0007669"/>
    <property type="project" value="TreeGrafter"/>
</dbReference>
<dbReference type="GO" id="GO:0016149">
    <property type="term" value="F:translation release factor activity, codon specific"/>
    <property type="evidence" value="ECO:0007669"/>
    <property type="project" value="UniProtKB-UniRule"/>
</dbReference>
<dbReference type="GO" id="GO:0006449">
    <property type="term" value="P:regulation of translational termination"/>
    <property type="evidence" value="ECO:0007669"/>
    <property type="project" value="UniProtKB-UniRule"/>
</dbReference>
<dbReference type="CDD" id="cd04169">
    <property type="entry name" value="RF3"/>
    <property type="match status" value="1"/>
</dbReference>
<dbReference type="CDD" id="cd03689">
    <property type="entry name" value="RF3_II"/>
    <property type="match status" value="1"/>
</dbReference>
<dbReference type="CDD" id="cd16259">
    <property type="entry name" value="RF3_III"/>
    <property type="match status" value="1"/>
</dbReference>
<dbReference type="FunFam" id="2.40.30.10:FF:000040">
    <property type="entry name" value="Peptide chain release factor 3"/>
    <property type="match status" value="1"/>
</dbReference>
<dbReference type="FunFam" id="3.30.70.3280:FF:000001">
    <property type="entry name" value="Peptide chain release factor 3"/>
    <property type="match status" value="1"/>
</dbReference>
<dbReference type="FunFam" id="3.40.50.300:FF:000184">
    <property type="entry name" value="Peptide chain release factor 3"/>
    <property type="match status" value="1"/>
</dbReference>
<dbReference type="FunFam" id="3.40.50.300:FF:000253">
    <property type="entry name" value="Peptide chain release factor 3"/>
    <property type="match status" value="1"/>
</dbReference>
<dbReference type="Gene3D" id="3.40.50.300">
    <property type="entry name" value="P-loop containing nucleotide triphosphate hydrolases"/>
    <property type="match status" value="3"/>
</dbReference>
<dbReference type="Gene3D" id="3.30.70.3280">
    <property type="entry name" value="Peptide chain release factor 3, domain III"/>
    <property type="match status" value="1"/>
</dbReference>
<dbReference type="HAMAP" id="MF_00072">
    <property type="entry name" value="Rel_fac_3"/>
    <property type="match status" value="1"/>
</dbReference>
<dbReference type="InterPro" id="IPR053905">
    <property type="entry name" value="EF-G-like_DII"/>
</dbReference>
<dbReference type="InterPro" id="IPR035647">
    <property type="entry name" value="EFG_III/V"/>
</dbReference>
<dbReference type="InterPro" id="IPR031157">
    <property type="entry name" value="G_TR_CS"/>
</dbReference>
<dbReference type="InterPro" id="IPR027417">
    <property type="entry name" value="P-loop_NTPase"/>
</dbReference>
<dbReference type="InterPro" id="IPR004548">
    <property type="entry name" value="PrfC"/>
</dbReference>
<dbReference type="InterPro" id="IPR032090">
    <property type="entry name" value="RF3_C"/>
</dbReference>
<dbReference type="InterPro" id="IPR038467">
    <property type="entry name" value="RF3_dom_3_sf"/>
</dbReference>
<dbReference type="InterPro" id="IPR041732">
    <property type="entry name" value="RF3_GTP-bd"/>
</dbReference>
<dbReference type="InterPro" id="IPR005225">
    <property type="entry name" value="Small_GTP-bd"/>
</dbReference>
<dbReference type="InterPro" id="IPR000795">
    <property type="entry name" value="T_Tr_GTP-bd_dom"/>
</dbReference>
<dbReference type="InterPro" id="IPR009000">
    <property type="entry name" value="Transl_B-barrel_sf"/>
</dbReference>
<dbReference type="NCBIfam" id="TIGR00503">
    <property type="entry name" value="prfC"/>
    <property type="match status" value="1"/>
</dbReference>
<dbReference type="NCBIfam" id="NF001964">
    <property type="entry name" value="PRK00741.1"/>
    <property type="match status" value="1"/>
</dbReference>
<dbReference type="NCBIfam" id="TIGR00231">
    <property type="entry name" value="small_GTP"/>
    <property type="match status" value="1"/>
</dbReference>
<dbReference type="PANTHER" id="PTHR43556">
    <property type="entry name" value="PEPTIDE CHAIN RELEASE FACTOR RF3"/>
    <property type="match status" value="1"/>
</dbReference>
<dbReference type="PANTHER" id="PTHR43556:SF2">
    <property type="entry name" value="PEPTIDE CHAIN RELEASE FACTOR RF3"/>
    <property type="match status" value="1"/>
</dbReference>
<dbReference type="Pfam" id="PF22042">
    <property type="entry name" value="EF-G_D2"/>
    <property type="match status" value="1"/>
</dbReference>
<dbReference type="Pfam" id="PF00009">
    <property type="entry name" value="GTP_EFTU"/>
    <property type="match status" value="1"/>
</dbReference>
<dbReference type="Pfam" id="PF16658">
    <property type="entry name" value="RF3_C"/>
    <property type="match status" value="1"/>
</dbReference>
<dbReference type="PRINTS" id="PR00315">
    <property type="entry name" value="ELONGATNFCT"/>
</dbReference>
<dbReference type="SUPFAM" id="SSF54980">
    <property type="entry name" value="EF-G C-terminal domain-like"/>
    <property type="match status" value="1"/>
</dbReference>
<dbReference type="SUPFAM" id="SSF52540">
    <property type="entry name" value="P-loop containing nucleoside triphosphate hydrolases"/>
    <property type="match status" value="1"/>
</dbReference>
<dbReference type="SUPFAM" id="SSF50447">
    <property type="entry name" value="Translation proteins"/>
    <property type="match status" value="1"/>
</dbReference>
<dbReference type="PROSITE" id="PS00301">
    <property type="entry name" value="G_TR_1"/>
    <property type="match status" value="1"/>
</dbReference>
<dbReference type="PROSITE" id="PS51722">
    <property type="entry name" value="G_TR_2"/>
    <property type="match status" value="1"/>
</dbReference>
<sequence>MTLSPYLQEVAKRRTFAIISHPDAGKTTITEKVLLFGQAIQTAGTVKGRGSSQHAKSDWMEMEKQRGISITTSVMQFPYHDCLVNLLDTPGHEDFSEDTYRTLTAVDCCLMVIDAAKGVEDRTRKLMEVTRLRDTPILTFMNKLDRDIRDPMELLDEVENELKIGCAPITWPIGCGKLFKGVYHLYKDETYLYQTGKGHTIQEVRIVKGLNNPDLDAAVGEDLAQQLRDELELVQGASNEFDEELFLAGEITPVFFGTALGNFGVDHMLDGLVAWAPAPMPRQTDTRTVEASEEKFTGFVFKIQANMDPKHRDRVAFMRVVSGKYEKGMKLRQVRTGKDVVISDALTFMAGDRSHVEEAYPGDILGLHNHGTIQIGDTFTQGEMMKFTGIPNFAPELFRRIRLKDPLKQKQLLKGLVQLSEEGAVQVFRPISNNDLIVGAVGVLQFDVVVARLKSEYNVEAIYESVNVATARWVESADAKKFEEFKRKNETQLALDGGDNLTYIAPTMVNLNLTQERYPDVQFRKTREH</sequence>
<protein>
    <recommendedName>
        <fullName evidence="1">Peptide chain release factor 3</fullName>
        <shortName evidence="1">RF-3</shortName>
    </recommendedName>
</protein>
<proteinExistence type="inferred from homology"/>
<accession>C0Q7L6</accession>
<comment type="function">
    <text evidence="1">Increases the formation of ribosomal termination complexes and stimulates activities of RF-1 and RF-2. It binds guanine nucleotides and has strong preference for UGA stop codons. It may interact directly with the ribosome. The stimulation of RF-1 and RF-2 is significantly reduced by GTP and GDP, but not by GMP.</text>
</comment>
<comment type="subcellular location">
    <subcellularLocation>
        <location evidence="1">Cytoplasm</location>
    </subcellularLocation>
</comment>
<comment type="similarity">
    <text evidence="1">Belongs to the TRAFAC class translation factor GTPase superfamily. Classic translation factor GTPase family. PrfC subfamily.</text>
</comment>
<reference key="1">
    <citation type="journal article" date="2009" name="PLoS ONE">
        <title>Salmonella paratyphi C: genetic divergence from Salmonella choleraesuis and pathogenic convergence with Salmonella typhi.</title>
        <authorList>
            <person name="Liu W.-Q."/>
            <person name="Feng Y."/>
            <person name="Wang Y."/>
            <person name="Zou Q.-H."/>
            <person name="Chen F."/>
            <person name="Guo J.-T."/>
            <person name="Peng Y.-H."/>
            <person name="Jin Y."/>
            <person name="Li Y.-G."/>
            <person name="Hu S.-N."/>
            <person name="Johnston R.N."/>
            <person name="Liu G.-R."/>
            <person name="Liu S.-L."/>
        </authorList>
    </citation>
    <scope>NUCLEOTIDE SEQUENCE [LARGE SCALE GENOMIC DNA]</scope>
    <source>
        <strain>RKS4594</strain>
    </source>
</reference>
<name>RF3_SALPC</name>
<organism>
    <name type="scientific">Salmonella paratyphi C (strain RKS4594)</name>
    <dbReference type="NCBI Taxonomy" id="476213"/>
    <lineage>
        <taxon>Bacteria</taxon>
        <taxon>Pseudomonadati</taxon>
        <taxon>Pseudomonadota</taxon>
        <taxon>Gammaproteobacteria</taxon>
        <taxon>Enterobacterales</taxon>
        <taxon>Enterobacteriaceae</taxon>
        <taxon>Salmonella</taxon>
    </lineage>
</organism>
<feature type="chain" id="PRO_1000193533" description="Peptide chain release factor 3">
    <location>
        <begin position="1"/>
        <end position="529"/>
    </location>
</feature>
<feature type="domain" description="tr-type G">
    <location>
        <begin position="11"/>
        <end position="280"/>
    </location>
</feature>
<feature type="binding site" evidence="1">
    <location>
        <begin position="20"/>
        <end position="27"/>
    </location>
    <ligand>
        <name>GTP</name>
        <dbReference type="ChEBI" id="CHEBI:37565"/>
    </ligand>
</feature>
<feature type="binding site" evidence="1">
    <location>
        <begin position="88"/>
        <end position="92"/>
    </location>
    <ligand>
        <name>GTP</name>
        <dbReference type="ChEBI" id="CHEBI:37565"/>
    </ligand>
</feature>
<feature type="binding site" evidence="1">
    <location>
        <begin position="142"/>
        <end position="145"/>
    </location>
    <ligand>
        <name>GTP</name>
        <dbReference type="ChEBI" id="CHEBI:37565"/>
    </ligand>
</feature>
<evidence type="ECO:0000255" key="1">
    <source>
        <dbReference type="HAMAP-Rule" id="MF_00072"/>
    </source>
</evidence>
<gene>
    <name evidence="1" type="primary">prfC</name>
    <name type="ordered locus">SPC_4696</name>
</gene>
<keyword id="KW-0963">Cytoplasm</keyword>
<keyword id="KW-0342">GTP-binding</keyword>
<keyword id="KW-0547">Nucleotide-binding</keyword>
<keyword id="KW-0648">Protein biosynthesis</keyword>